<comment type="function">
    <text evidence="2">Cell wall formation.</text>
</comment>
<comment type="catalytic activity">
    <reaction evidence="2">
        <text>2 D-alanine + ATP = D-alanyl-D-alanine + ADP + phosphate + H(+)</text>
        <dbReference type="Rhea" id="RHEA:11224"/>
        <dbReference type="ChEBI" id="CHEBI:15378"/>
        <dbReference type="ChEBI" id="CHEBI:30616"/>
        <dbReference type="ChEBI" id="CHEBI:43474"/>
        <dbReference type="ChEBI" id="CHEBI:57416"/>
        <dbReference type="ChEBI" id="CHEBI:57822"/>
        <dbReference type="ChEBI" id="CHEBI:456216"/>
        <dbReference type="EC" id="6.3.2.4"/>
    </reaction>
</comment>
<comment type="cofactor">
    <cofactor evidence="1">
        <name>Mg(2+)</name>
        <dbReference type="ChEBI" id="CHEBI:18420"/>
    </cofactor>
    <cofactor evidence="1">
        <name>Mn(2+)</name>
        <dbReference type="ChEBI" id="CHEBI:29035"/>
    </cofactor>
    <text evidence="1">Binds 2 magnesium or manganese ions per subunit.</text>
</comment>
<comment type="pathway">
    <text evidence="2">Cell wall biogenesis; peptidoglycan biosynthesis.</text>
</comment>
<comment type="subcellular location">
    <subcellularLocation>
        <location evidence="2">Cytoplasm</location>
    </subcellularLocation>
</comment>
<comment type="similarity">
    <text evidence="2">Belongs to the D-alanine--D-alanine ligase family.</text>
</comment>
<keyword id="KW-0067">ATP-binding</keyword>
<keyword id="KW-0133">Cell shape</keyword>
<keyword id="KW-0961">Cell wall biogenesis/degradation</keyword>
<keyword id="KW-0963">Cytoplasm</keyword>
<keyword id="KW-0436">Ligase</keyword>
<keyword id="KW-0460">Magnesium</keyword>
<keyword id="KW-0464">Manganese</keyword>
<keyword id="KW-0479">Metal-binding</keyword>
<keyword id="KW-0547">Nucleotide-binding</keyword>
<keyword id="KW-0573">Peptidoglycan synthesis</keyword>
<gene>
    <name evidence="2" type="primary">ddl</name>
    <name type="ordered locus">BRE_197</name>
</gene>
<sequence>MKKNLMLIFGGVSFEHEISLRSAYGIYSSLLKLDKYNVFSIFVDKVTGIWYLLDSVPSSAELIKRHTTSIVNFIPGCGIFVNNKSLEIDVIFPIIHGRTGEDGAIQGFVKMMDIPCVGAGILGSAISINKYFCKVLLKSFNIPVVSFIGFKKDDYILNKEGIKEDINNKLNYPVIVKPSVLGSSIGINVAYNVSQIEKYIEEAFEYDLTVVVEKFIKAREIECAVIGNDQIKIFTPGEIVVQDFIFYDYDAKYSTVPGDSIVFNIPAHLDMKHLLDIKEYAFLTYKYLELRGMARIDFLISKDTNLLYVNEVNTIPGFTDISMFAKMCEHDGLSYESLVDKLITLAFESYKKRKDKIDFTRLES</sequence>
<protein>
    <recommendedName>
        <fullName evidence="2">D-alanine--D-alanine ligase</fullName>
        <ecNumber evidence="2">6.3.2.4</ecNumber>
    </recommendedName>
    <alternativeName>
        <fullName evidence="2">D-Ala-D-Ala ligase</fullName>
    </alternativeName>
    <alternativeName>
        <fullName evidence="2">D-alanylalanine synthetase</fullName>
    </alternativeName>
</protein>
<proteinExistence type="inferred from homology"/>
<organism>
    <name type="scientific">Borrelia recurrentis (strain A1)</name>
    <dbReference type="NCBI Taxonomy" id="412418"/>
    <lineage>
        <taxon>Bacteria</taxon>
        <taxon>Pseudomonadati</taxon>
        <taxon>Spirochaetota</taxon>
        <taxon>Spirochaetia</taxon>
        <taxon>Spirochaetales</taxon>
        <taxon>Borreliaceae</taxon>
        <taxon>Borrelia</taxon>
    </lineage>
</organism>
<evidence type="ECO:0000250" key="1"/>
<evidence type="ECO:0000255" key="2">
    <source>
        <dbReference type="HAMAP-Rule" id="MF_00047"/>
    </source>
</evidence>
<name>DDL_BORRA</name>
<reference key="1">
    <citation type="journal article" date="2008" name="PLoS Genet.">
        <title>The genome of Borrelia recurrentis, the agent of deadly louse-borne relapsing fever, is a degraded subset of tick-borne Borrelia duttonii.</title>
        <authorList>
            <person name="Lescot M."/>
            <person name="Audic S."/>
            <person name="Robert C."/>
            <person name="Nguyen T.T."/>
            <person name="Blanc G."/>
            <person name="Cutler S.J."/>
            <person name="Wincker P."/>
            <person name="Couloux A."/>
            <person name="Claverie J.-M."/>
            <person name="Raoult D."/>
            <person name="Drancourt M."/>
        </authorList>
    </citation>
    <scope>NUCLEOTIDE SEQUENCE [LARGE SCALE GENOMIC DNA]</scope>
    <source>
        <strain>A1</strain>
    </source>
</reference>
<accession>B5RR18</accession>
<dbReference type="EC" id="6.3.2.4" evidence="2"/>
<dbReference type="EMBL" id="CP000993">
    <property type="protein sequence ID" value="ACH94452.1"/>
    <property type="molecule type" value="Genomic_DNA"/>
</dbReference>
<dbReference type="RefSeq" id="WP_012538728.1">
    <property type="nucleotide sequence ID" value="NC_011244.1"/>
</dbReference>
<dbReference type="SMR" id="B5RR18"/>
<dbReference type="KEGG" id="bre:BRE_197"/>
<dbReference type="HOGENOM" id="CLU_039268_0_0_12"/>
<dbReference type="UniPathway" id="UPA00219"/>
<dbReference type="Proteomes" id="UP000000612">
    <property type="component" value="Chromosome"/>
</dbReference>
<dbReference type="GO" id="GO:0005829">
    <property type="term" value="C:cytosol"/>
    <property type="evidence" value="ECO:0007669"/>
    <property type="project" value="TreeGrafter"/>
</dbReference>
<dbReference type="GO" id="GO:0005524">
    <property type="term" value="F:ATP binding"/>
    <property type="evidence" value="ECO:0007669"/>
    <property type="project" value="UniProtKB-KW"/>
</dbReference>
<dbReference type="GO" id="GO:0008716">
    <property type="term" value="F:D-alanine-D-alanine ligase activity"/>
    <property type="evidence" value="ECO:0007669"/>
    <property type="project" value="UniProtKB-UniRule"/>
</dbReference>
<dbReference type="GO" id="GO:0046872">
    <property type="term" value="F:metal ion binding"/>
    <property type="evidence" value="ECO:0007669"/>
    <property type="project" value="UniProtKB-KW"/>
</dbReference>
<dbReference type="GO" id="GO:0071555">
    <property type="term" value="P:cell wall organization"/>
    <property type="evidence" value="ECO:0007669"/>
    <property type="project" value="UniProtKB-KW"/>
</dbReference>
<dbReference type="GO" id="GO:0009252">
    <property type="term" value="P:peptidoglycan biosynthetic process"/>
    <property type="evidence" value="ECO:0007669"/>
    <property type="project" value="UniProtKB-UniRule"/>
</dbReference>
<dbReference type="GO" id="GO:0008360">
    <property type="term" value="P:regulation of cell shape"/>
    <property type="evidence" value="ECO:0007669"/>
    <property type="project" value="UniProtKB-KW"/>
</dbReference>
<dbReference type="Gene3D" id="3.40.50.20">
    <property type="match status" value="1"/>
</dbReference>
<dbReference type="Gene3D" id="3.30.1490.20">
    <property type="entry name" value="ATP-grasp fold, A domain"/>
    <property type="match status" value="1"/>
</dbReference>
<dbReference type="Gene3D" id="3.30.470.20">
    <property type="entry name" value="ATP-grasp fold, B domain"/>
    <property type="match status" value="1"/>
</dbReference>
<dbReference type="HAMAP" id="MF_00047">
    <property type="entry name" value="Dala_Dala_lig"/>
    <property type="match status" value="1"/>
</dbReference>
<dbReference type="InterPro" id="IPR011761">
    <property type="entry name" value="ATP-grasp"/>
</dbReference>
<dbReference type="InterPro" id="IPR013815">
    <property type="entry name" value="ATP_grasp_subdomain_1"/>
</dbReference>
<dbReference type="InterPro" id="IPR000291">
    <property type="entry name" value="D-Ala_lig_Van_CS"/>
</dbReference>
<dbReference type="InterPro" id="IPR005905">
    <property type="entry name" value="D_ala_D_ala"/>
</dbReference>
<dbReference type="InterPro" id="IPR011095">
    <property type="entry name" value="Dala_Dala_lig_C"/>
</dbReference>
<dbReference type="InterPro" id="IPR011127">
    <property type="entry name" value="Dala_Dala_lig_N"/>
</dbReference>
<dbReference type="InterPro" id="IPR016185">
    <property type="entry name" value="PreATP-grasp_dom_sf"/>
</dbReference>
<dbReference type="NCBIfam" id="TIGR01205">
    <property type="entry name" value="D_ala_D_alaTIGR"/>
    <property type="match status" value="1"/>
</dbReference>
<dbReference type="NCBIfam" id="NF002528">
    <property type="entry name" value="PRK01966.1-4"/>
    <property type="match status" value="1"/>
</dbReference>
<dbReference type="NCBIfam" id="NF011168">
    <property type="entry name" value="PRK14570.1"/>
    <property type="match status" value="1"/>
</dbReference>
<dbReference type="PANTHER" id="PTHR23132">
    <property type="entry name" value="D-ALANINE--D-ALANINE LIGASE"/>
    <property type="match status" value="1"/>
</dbReference>
<dbReference type="PANTHER" id="PTHR23132:SF25">
    <property type="entry name" value="D-ALANINE--D-ALANINE LIGASE A"/>
    <property type="match status" value="1"/>
</dbReference>
<dbReference type="Pfam" id="PF07478">
    <property type="entry name" value="Dala_Dala_lig_C"/>
    <property type="match status" value="1"/>
</dbReference>
<dbReference type="Pfam" id="PF01820">
    <property type="entry name" value="Dala_Dala_lig_N"/>
    <property type="match status" value="1"/>
</dbReference>
<dbReference type="PIRSF" id="PIRSF039102">
    <property type="entry name" value="Ddl/VanB"/>
    <property type="match status" value="1"/>
</dbReference>
<dbReference type="SUPFAM" id="SSF56059">
    <property type="entry name" value="Glutathione synthetase ATP-binding domain-like"/>
    <property type="match status" value="1"/>
</dbReference>
<dbReference type="SUPFAM" id="SSF52440">
    <property type="entry name" value="PreATP-grasp domain"/>
    <property type="match status" value="1"/>
</dbReference>
<dbReference type="PROSITE" id="PS50975">
    <property type="entry name" value="ATP_GRASP"/>
    <property type="match status" value="1"/>
</dbReference>
<dbReference type="PROSITE" id="PS00843">
    <property type="entry name" value="DALA_DALA_LIGASE_1"/>
    <property type="match status" value="1"/>
</dbReference>
<dbReference type="PROSITE" id="PS00844">
    <property type="entry name" value="DALA_DALA_LIGASE_2"/>
    <property type="match status" value="1"/>
</dbReference>
<feature type="chain" id="PRO_1000091163" description="D-alanine--D-alanine ligase">
    <location>
        <begin position="1"/>
        <end position="364"/>
    </location>
</feature>
<feature type="domain" description="ATP-grasp" evidence="2">
    <location>
        <begin position="134"/>
        <end position="344"/>
    </location>
</feature>
<feature type="binding site" evidence="2">
    <location>
        <begin position="167"/>
        <end position="222"/>
    </location>
    <ligand>
        <name>ATP</name>
        <dbReference type="ChEBI" id="CHEBI:30616"/>
    </ligand>
</feature>
<feature type="binding site" evidence="2">
    <location>
        <position position="297"/>
    </location>
    <ligand>
        <name>Mg(2+)</name>
        <dbReference type="ChEBI" id="CHEBI:18420"/>
        <label>1</label>
    </ligand>
</feature>
<feature type="binding site" evidence="2">
    <location>
        <position position="311"/>
    </location>
    <ligand>
        <name>Mg(2+)</name>
        <dbReference type="ChEBI" id="CHEBI:18420"/>
        <label>1</label>
    </ligand>
</feature>
<feature type="binding site" evidence="2">
    <location>
        <position position="311"/>
    </location>
    <ligand>
        <name>Mg(2+)</name>
        <dbReference type="ChEBI" id="CHEBI:18420"/>
        <label>2</label>
    </ligand>
</feature>
<feature type="binding site" evidence="2">
    <location>
        <position position="313"/>
    </location>
    <ligand>
        <name>Mg(2+)</name>
        <dbReference type="ChEBI" id="CHEBI:18420"/>
        <label>2</label>
    </ligand>
</feature>